<organism>
    <name type="scientific">Acinetobacter baumannii (strain ACICU)</name>
    <dbReference type="NCBI Taxonomy" id="405416"/>
    <lineage>
        <taxon>Bacteria</taxon>
        <taxon>Pseudomonadati</taxon>
        <taxon>Pseudomonadota</taxon>
        <taxon>Gammaproteobacteria</taxon>
        <taxon>Moraxellales</taxon>
        <taxon>Moraxellaceae</taxon>
        <taxon>Acinetobacter</taxon>
        <taxon>Acinetobacter calcoaceticus/baumannii complex</taxon>
    </lineage>
</organism>
<comment type="function">
    <text evidence="1">Allows the formation of correctly charged Gln-tRNA(Gln) through the transamidation of misacylated Glu-tRNA(Gln) in organisms which lack glutaminyl-tRNA synthetase. The reaction takes place in the presence of glutamine and ATP through an activated gamma-phospho-Glu-tRNA(Gln).</text>
</comment>
<comment type="catalytic activity">
    <reaction evidence="1">
        <text>L-glutamyl-tRNA(Gln) + L-glutamine + ATP + H2O = L-glutaminyl-tRNA(Gln) + L-glutamate + ADP + phosphate + H(+)</text>
        <dbReference type="Rhea" id="RHEA:17521"/>
        <dbReference type="Rhea" id="RHEA-COMP:9681"/>
        <dbReference type="Rhea" id="RHEA-COMP:9684"/>
        <dbReference type="ChEBI" id="CHEBI:15377"/>
        <dbReference type="ChEBI" id="CHEBI:15378"/>
        <dbReference type="ChEBI" id="CHEBI:29985"/>
        <dbReference type="ChEBI" id="CHEBI:30616"/>
        <dbReference type="ChEBI" id="CHEBI:43474"/>
        <dbReference type="ChEBI" id="CHEBI:58359"/>
        <dbReference type="ChEBI" id="CHEBI:78520"/>
        <dbReference type="ChEBI" id="CHEBI:78521"/>
        <dbReference type="ChEBI" id="CHEBI:456216"/>
        <dbReference type="EC" id="6.3.5.7"/>
    </reaction>
</comment>
<comment type="subunit">
    <text evidence="1">Heterotrimer of A, B and C subunits.</text>
</comment>
<comment type="similarity">
    <text evidence="1">Belongs to the amidase family. GatA subfamily.</text>
</comment>
<gene>
    <name evidence="1" type="primary">gatA</name>
    <name type="ordered locus">ACICU_03034</name>
</gene>
<accession>B2HY00</accession>
<dbReference type="EC" id="6.3.5.7" evidence="1"/>
<dbReference type="EMBL" id="CP000863">
    <property type="protein sequence ID" value="ACC58346.1"/>
    <property type="molecule type" value="Genomic_DNA"/>
</dbReference>
<dbReference type="RefSeq" id="WP_000130658.1">
    <property type="nucleotide sequence ID" value="NZ_CP031380.1"/>
</dbReference>
<dbReference type="SMR" id="B2HY00"/>
<dbReference type="KEGG" id="abc:ACICU_03034"/>
<dbReference type="HOGENOM" id="CLU_009600_0_3_6"/>
<dbReference type="Proteomes" id="UP000008839">
    <property type="component" value="Chromosome"/>
</dbReference>
<dbReference type="GO" id="GO:0030956">
    <property type="term" value="C:glutamyl-tRNA(Gln) amidotransferase complex"/>
    <property type="evidence" value="ECO:0007669"/>
    <property type="project" value="InterPro"/>
</dbReference>
<dbReference type="GO" id="GO:0005524">
    <property type="term" value="F:ATP binding"/>
    <property type="evidence" value="ECO:0007669"/>
    <property type="project" value="UniProtKB-KW"/>
</dbReference>
<dbReference type="GO" id="GO:0050567">
    <property type="term" value="F:glutaminyl-tRNA synthase (glutamine-hydrolyzing) activity"/>
    <property type="evidence" value="ECO:0007669"/>
    <property type="project" value="UniProtKB-UniRule"/>
</dbReference>
<dbReference type="GO" id="GO:0006412">
    <property type="term" value="P:translation"/>
    <property type="evidence" value="ECO:0007669"/>
    <property type="project" value="UniProtKB-UniRule"/>
</dbReference>
<dbReference type="Gene3D" id="3.90.1300.10">
    <property type="entry name" value="Amidase signature (AS) domain"/>
    <property type="match status" value="1"/>
</dbReference>
<dbReference type="HAMAP" id="MF_00120">
    <property type="entry name" value="GatA"/>
    <property type="match status" value="1"/>
</dbReference>
<dbReference type="InterPro" id="IPR000120">
    <property type="entry name" value="Amidase"/>
</dbReference>
<dbReference type="InterPro" id="IPR020556">
    <property type="entry name" value="Amidase_CS"/>
</dbReference>
<dbReference type="InterPro" id="IPR023631">
    <property type="entry name" value="Amidase_dom"/>
</dbReference>
<dbReference type="InterPro" id="IPR036928">
    <property type="entry name" value="AS_sf"/>
</dbReference>
<dbReference type="InterPro" id="IPR004412">
    <property type="entry name" value="GatA"/>
</dbReference>
<dbReference type="NCBIfam" id="TIGR00132">
    <property type="entry name" value="gatA"/>
    <property type="match status" value="1"/>
</dbReference>
<dbReference type="PANTHER" id="PTHR11895:SF151">
    <property type="entry name" value="GLUTAMYL-TRNA(GLN) AMIDOTRANSFERASE SUBUNIT A"/>
    <property type="match status" value="1"/>
</dbReference>
<dbReference type="PANTHER" id="PTHR11895">
    <property type="entry name" value="TRANSAMIDASE"/>
    <property type="match status" value="1"/>
</dbReference>
<dbReference type="Pfam" id="PF01425">
    <property type="entry name" value="Amidase"/>
    <property type="match status" value="1"/>
</dbReference>
<dbReference type="SUPFAM" id="SSF75304">
    <property type="entry name" value="Amidase signature (AS) enzymes"/>
    <property type="match status" value="1"/>
</dbReference>
<dbReference type="PROSITE" id="PS00571">
    <property type="entry name" value="AMIDASES"/>
    <property type="match status" value="1"/>
</dbReference>
<protein>
    <recommendedName>
        <fullName evidence="1">Glutamyl-tRNA(Gln) amidotransferase subunit A</fullName>
        <shortName evidence="1">Glu-ADT subunit A</shortName>
        <ecNumber evidence="1">6.3.5.7</ecNumber>
    </recommendedName>
</protein>
<reference key="1">
    <citation type="journal article" date="2008" name="Antimicrob. Agents Chemother.">
        <title>Whole-genome pyrosequencing of an epidemic multidrug-resistant Acinetobacter baumannii strain belonging to the European clone II group.</title>
        <authorList>
            <person name="Iacono M."/>
            <person name="Villa L."/>
            <person name="Fortini D."/>
            <person name="Bordoni R."/>
            <person name="Imperi F."/>
            <person name="Bonnal R.J."/>
            <person name="Sicheritz-Ponten T."/>
            <person name="De Bellis G."/>
            <person name="Visca P."/>
            <person name="Cassone A."/>
            <person name="Carattoli A."/>
        </authorList>
    </citation>
    <scope>NUCLEOTIDE SEQUENCE [LARGE SCALE GENOMIC DNA]</scope>
    <source>
        <strain>ACICU</strain>
    </source>
</reference>
<keyword id="KW-0067">ATP-binding</keyword>
<keyword id="KW-0436">Ligase</keyword>
<keyword id="KW-0547">Nucleotide-binding</keyword>
<keyword id="KW-0648">Protein biosynthesis</keyword>
<evidence type="ECO:0000255" key="1">
    <source>
        <dbReference type="HAMAP-Rule" id="MF_00120"/>
    </source>
</evidence>
<feature type="chain" id="PRO_1000095100" description="Glutamyl-tRNA(Gln) amidotransferase subunit A">
    <location>
        <begin position="1"/>
        <end position="492"/>
    </location>
</feature>
<feature type="active site" description="Charge relay system" evidence="1">
    <location>
        <position position="79"/>
    </location>
</feature>
<feature type="active site" description="Charge relay system" evidence="1">
    <location>
        <position position="154"/>
    </location>
</feature>
<feature type="active site" description="Acyl-ester intermediate" evidence="1">
    <location>
        <position position="178"/>
    </location>
</feature>
<name>GATA_ACIBC</name>
<proteinExistence type="inferred from homology"/>
<sequence length="492" mass="53012">MTDLHRLSIRELAEGLSQAKFSSRELTEHYLKRIAKIDPQVKSYVTVTPEQALREADAADAALKAGNATALTGIPLAHKDIFCTKGIKTTAGSKMLDNFISPYDATVVEKTKAAGLVTLGKVNMDEFAMGSTSESSYVGATSNPWALDHVPGGSSGGSAAAVAADLAPFATGTDTGGSIRQPASFCGLTGLKPTYGRVSRFGIIAYASSLDQAGPMARSAEDCAYLMNVIAGHDAKDSTSVKKEVDDYVANLNNTSVKGLRIGIPKQYFNVAGLDADVKARVEESLKKLEEMGAALVEIDLNMTEAYVPTYYLIAPAEASSNLSRYDGVRYGYRCENPADLMDLYKRSRSEGFGPEVQRRILIGTYALSAGYYDAYYVKAQKVRRLIQQDFLKAFENVDVIAAPAAPTTAYKIGASLDPVEMYLGDIYTIAVNLAGLPAINAPVGFDKDNLPVGLQLIGNYWSESQLLSIVHQYQQNTDWHTKRAAIAEENA</sequence>